<reference key="1">
    <citation type="submission" date="2007-05" db="EMBL/GenBank/DDBJ databases">
        <title>Complete sequence of Dehalococcoides sp. BAV1.</title>
        <authorList>
            <consortium name="US DOE Joint Genome Institute"/>
            <person name="Copeland A."/>
            <person name="Lucas S."/>
            <person name="Lapidus A."/>
            <person name="Barry K."/>
            <person name="Detter J.C."/>
            <person name="Glavina del Rio T."/>
            <person name="Hammon N."/>
            <person name="Israni S."/>
            <person name="Pitluck S."/>
            <person name="Lowry S."/>
            <person name="Clum A."/>
            <person name="Schmutz J."/>
            <person name="Larimer F."/>
            <person name="Land M."/>
            <person name="Hauser L."/>
            <person name="Kyrpides N."/>
            <person name="Kim E."/>
            <person name="Ritalahti K.M."/>
            <person name="Loeffler F."/>
            <person name="Richardson P."/>
        </authorList>
    </citation>
    <scope>NUCLEOTIDE SEQUENCE [LARGE SCALE GENOMIC DNA]</scope>
    <source>
        <strain>ATCC BAA-2100 / JCM 16839 / KCTC 5957 / BAV1</strain>
    </source>
</reference>
<dbReference type="EMBL" id="CP000688">
    <property type="protein sequence ID" value="ABQ17142.1"/>
    <property type="molecule type" value="Genomic_DNA"/>
</dbReference>
<dbReference type="SMR" id="A5FRM7"/>
<dbReference type="KEGG" id="deb:DehaBAV1_0557"/>
<dbReference type="PATRIC" id="fig|216389.18.peg.603"/>
<dbReference type="HOGENOM" id="CLU_060739_1_0_0"/>
<dbReference type="GO" id="GO:0003677">
    <property type="term" value="F:DNA binding"/>
    <property type="evidence" value="ECO:0007669"/>
    <property type="project" value="UniProtKB-UniRule"/>
</dbReference>
<dbReference type="GO" id="GO:0008270">
    <property type="term" value="F:zinc ion binding"/>
    <property type="evidence" value="ECO:0007669"/>
    <property type="project" value="UniProtKB-KW"/>
</dbReference>
<dbReference type="GO" id="GO:0006310">
    <property type="term" value="P:DNA recombination"/>
    <property type="evidence" value="ECO:0007669"/>
    <property type="project" value="UniProtKB-UniRule"/>
</dbReference>
<dbReference type="GO" id="GO:0006281">
    <property type="term" value="P:DNA repair"/>
    <property type="evidence" value="ECO:0007669"/>
    <property type="project" value="UniProtKB-UniRule"/>
</dbReference>
<dbReference type="CDD" id="cd01025">
    <property type="entry name" value="TOPRIM_recR"/>
    <property type="match status" value="1"/>
</dbReference>
<dbReference type="Gene3D" id="3.40.1360.10">
    <property type="match status" value="1"/>
</dbReference>
<dbReference type="Gene3D" id="6.10.250.240">
    <property type="match status" value="1"/>
</dbReference>
<dbReference type="Gene3D" id="1.10.8.420">
    <property type="entry name" value="RecR Domain 1"/>
    <property type="match status" value="1"/>
</dbReference>
<dbReference type="HAMAP" id="MF_00017">
    <property type="entry name" value="RecR"/>
    <property type="match status" value="1"/>
</dbReference>
<dbReference type="InterPro" id="IPR000093">
    <property type="entry name" value="DNA_Rcmb_RecR"/>
</dbReference>
<dbReference type="InterPro" id="IPR023627">
    <property type="entry name" value="Rcmb_RecR"/>
</dbReference>
<dbReference type="InterPro" id="IPR015967">
    <property type="entry name" value="Rcmb_RecR_Znf"/>
</dbReference>
<dbReference type="InterPro" id="IPR006171">
    <property type="entry name" value="TOPRIM_dom"/>
</dbReference>
<dbReference type="InterPro" id="IPR034137">
    <property type="entry name" value="TOPRIM_RecR"/>
</dbReference>
<dbReference type="NCBIfam" id="TIGR00615">
    <property type="entry name" value="recR"/>
    <property type="match status" value="1"/>
</dbReference>
<dbReference type="PANTHER" id="PTHR30446">
    <property type="entry name" value="RECOMBINATION PROTEIN RECR"/>
    <property type="match status" value="1"/>
</dbReference>
<dbReference type="PANTHER" id="PTHR30446:SF0">
    <property type="entry name" value="RECOMBINATION PROTEIN RECR"/>
    <property type="match status" value="1"/>
</dbReference>
<dbReference type="Pfam" id="PF21175">
    <property type="entry name" value="RecR_C"/>
    <property type="match status" value="1"/>
</dbReference>
<dbReference type="Pfam" id="PF21176">
    <property type="entry name" value="RecR_HhH"/>
    <property type="match status" value="1"/>
</dbReference>
<dbReference type="Pfam" id="PF02132">
    <property type="entry name" value="RecR_ZnF"/>
    <property type="match status" value="1"/>
</dbReference>
<dbReference type="Pfam" id="PF13662">
    <property type="entry name" value="Toprim_4"/>
    <property type="match status" value="1"/>
</dbReference>
<dbReference type="SMART" id="SM00493">
    <property type="entry name" value="TOPRIM"/>
    <property type="match status" value="1"/>
</dbReference>
<dbReference type="SUPFAM" id="SSF111304">
    <property type="entry name" value="Recombination protein RecR"/>
    <property type="match status" value="1"/>
</dbReference>
<dbReference type="PROSITE" id="PS50880">
    <property type="entry name" value="TOPRIM"/>
    <property type="match status" value="1"/>
</dbReference>
<name>RECR_DEHMB</name>
<sequence length="204" mass="22518">MKDTSLPSTAGVVNKLIDSLGKLPGIGPKSAQRLAFYLMRAPEDQVISLSDTIRNIKNQISQCRICCNVADSELCPICQNTKRETNKICVVEQPQDILALEHVGVYRGYYHVLHGAISPTEGITSQNIRINELMVRLDNGQVEEIILATNPTTEGEATAMYLSRLITPLGIKVTRLARGLPFGTELEYADDVTLSRAMEGRQNF</sequence>
<proteinExistence type="inferred from homology"/>
<evidence type="ECO:0000255" key="1">
    <source>
        <dbReference type="HAMAP-Rule" id="MF_00017"/>
    </source>
</evidence>
<feature type="chain" id="PRO_1000074117" description="Recombination protein RecR">
    <location>
        <begin position="1"/>
        <end position="204"/>
    </location>
</feature>
<feature type="domain" description="Toprim" evidence="1">
    <location>
        <begin position="86"/>
        <end position="181"/>
    </location>
</feature>
<feature type="zinc finger region" description="C4-type" evidence="1">
    <location>
        <begin position="63"/>
        <end position="78"/>
    </location>
</feature>
<accession>A5FRM7</accession>
<keyword id="KW-0227">DNA damage</keyword>
<keyword id="KW-0233">DNA recombination</keyword>
<keyword id="KW-0234">DNA repair</keyword>
<keyword id="KW-0479">Metal-binding</keyword>
<keyword id="KW-0862">Zinc</keyword>
<keyword id="KW-0863">Zinc-finger</keyword>
<comment type="function">
    <text evidence="1">May play a role in DNA repair. It seems to be involved in an RecBC-independent recombinational process of DNA repair. It may act with RecF and RecO.</text>
</comment>
<comment type="similarity">
    <text evidence="1">Belongs to the RecR family.</text>
</comment>
<gene>
    <name evidence="1" type="primary">recR</name>
    <name type="ordered locus">DehaBAV1_0557</name>
</gene>
<organism>
    <name type="scientific">Dehalococcoides mccartyi (strain ATCC BAA-2100 / JCM 16839 / KCTC 5957 / BAV1)</name>
    <dbReference type="NCBI Taxonomy" id="216389"/>
    <lineage>
        <taxon>Bacteria</taxon>
        <taxon>Bacillati</taxon>
        <taxon>Chloroflexota</taxon>
        <taxon>Dehalococcoidia</taxon>
        <taxon>Dehalococcoidales</taxon>
        <taxon>Dehalococcoidaceae</taxon>
        <taxon>Dehalococcoides</taxon>
    </lineage>
</organism>
<protein>
    <recommendedName>
        <fullName evidence="1">Recombination protein RecR</fullName>
    </recommendedName>
</protein>